<proteinExistence type="inferred from homology"/>
<gene>
    <name evidence="1" type="primary">rplM</name>
    <name type="ordered locus">BSUIS_A0828</name>
</gene>
<reference key="1">
    <citation type="submission" date="2007-12" db="EMBL/GenBank/DDBJ databases">
        <title>Brucella suis ATCC 23445 whole genome shotgun sequencing project.</title>
        <authorList>
            <person name="Setubal J.C."/>
            <person name="Bowns C."/>
            <person name="Boyle S."/>
            <person name="Crasta O.R."/>
            <person name="Czar M.J."/>
            <person name="Dharmanolla C."/>
            <person name="Gillespie J.J."/>
            <person name="Kenyon R.W."/>
            <person name="Lu J."/>
            <person name="Mane S."/>
            <person name="Mohapatra S."/>
            <person name="Nagrani S."/>
            <person name="Purkayastha A."/>
            <person name="Rajasimha H.K."/>
            <person name="Shallom J.M."/>
            <person name="Shallom S."/>
            <person name="Shukla M."/>
            <person name="Snyder E.E."/>
            <person name="Sobral B.W."/>
            <person name="Wattam A.R."/>
            <person name="Will R."/>
            <person name="Williams K."/>
            <person name="Yoo H."/>
            <person name="Bruce D."/>
            <person name="Detter C."/>
            <person name="Munk C."/>
            <person name="Brettin T.S."/>
        </authorList>
    </citation>
    <scope>NUCLEOTIDE SEQUENCE [LARGE SCALE GENOMIC DNA]</scope>
    <source>
        <strain>ATCC 23445 / NCTC 10510</strain>
    </source>
</reference>
<protein>
    <recommendedName>
        <fullName evidence="1">Large ribosomal subunit protein uL13</fullName>
    </recommendedName>
    <alternativeName>
        <fullName evidence="2">50S ribosomal protein L13</fullName>
    </alternativeName>
</protein>
<evidence type="ECO:0000255" key="1">
    <source>
        <dbReference type="HAMAP-Rule" id="MF_01366"/>
    </source>
</evidence>
<evidence type="ECO:0000305" key="2"/>
<keyword id="KW-0687">Ribonucleoprotein</keyword>
<keyword id="KW-0689">Ribosomal protein</keyword>
<dbReference type="EMBL" id="CP000911">
    <property type="protein sequence ID" value="ABY37898.1"/>
    <property type="molecule type" value="Genomic_DNA"/>
</dbReference>
<dbReference type="RefSeq" id="WP_004688231.1">
    <property type="nucleotide sequence ID" value="NC_010169.1"/>
</dbReference>
<dbReference type="SMR" id="B0CLB8"/>
<dbReference type="GeneID" id="97533900"/>
<dbReference type="KEGG" id="bmt:BSUIS_A0828"/>
<dbReference type="HOGENOM" id="CLU_082184_2_0_5"/>
<dbReference type="Proteomes" id="UP000008545">
    <property type="component" value="Chromosome I"/>
</dbReference>
<dbReference type="GO" id="GO:0022625">
    <property type="term" value="C:cytosolic large ribosomal subunit"/>
    <property type="evidence" value="ECO:0007669"/>
    <property type="project" value="TreeGrafter"/>
</dbReference>
<dbReference type="GO" id="GO:0003729">
    <property type="term" value="F:mRNA binding"/>
    <property type="evidence" value="ECO:0007669"/>
    <property type="project" value="TreeGrafter"/>
</dbReference>
<dbReference type="GO" id="GO:0003735">
    <property type="term" value="F:structural constituent of ribosome"/>
    <property type="evidence" value="ECO:0007669"/>
    <property type="project" value="InterPro"/>
</dbReference>
<dbReference type="GO" id="GO:0017148">
    <property type="term" value="P:negative regulation of translation"/>
    <property type="evidence" value="ECO:0007669"/>
    <property type="project" value="TreeGrafter"/>
</dbReference>
<dbReference type="GO" id="GO:0006412">
    <property type="term" value="P:translation"/>
    <property type="evidence" value="ECO:0007669"/>
    <property type="project" value="UniProtKB-UniRule"/>
</dbReference>
<dbReference type="CDD" id="cd00392">
    <property type="entry name" value="Ribosomal_L13"/>
    <property type="match status" value="1"/>
</dbReference>
<dbReference type="FunFam" id="3.90.1180.10:FF:000001">
    <property type="entry name" value="50S ribosomal protein L13"/>
    <property type="match status" value="1"/>
</dbReference>
<dbReference type="Gene3D" id="3.90.1180.10">
    <property type="entry name" value="Ribosomal protein L13"/>
    <property type="match status" value="1"/>
</dbReference>
<dbReference type="HAMAP" id="MF_01366">
    <property type="entry name" value="Ribosomal_uL13"/>
    <property type="match status" value="1"/>
</dbReference>
<dbReference type="InterPro" id="IPR005822">
    <property type="entry name" value="Ribosomal_uL13"/>
</dbReference>
<dbReference type="InterPro" id="IPR005823">
    <property type="entry name" value="Ribosomal_uL13_bac-type"/>
</dbReference>
<dbReference type="InterPro" id="IPR036899">
    <property type="entry name" value="Ribosomal_uL13_sf"/>
</dbReference>
<dbReference type="NCBIfam" id="TIGR01066">
    <property type="entry name" value="rplM_bact"/>
    <property type="match status" value="1"/>
</dbReference>
<dbReference type="PANTHER" id="PTHR11545:SF2">
    <property type="entry name" value="LARGE RIBOSOMAL SUBUNIT PROTEIN UL13M"/>
    <property type="match status" value="1"/>
</dbReference>
<dbReference type="PANTHER" id="PTHR11545">
    <property type="entry name" value="RIBOSOMAL PROTEIN L13"/>
    <property type="match status" value="1"/>
</dbReference>
<dbReference type="Pfam" id="PF00572">
    <property type="entry name" value="Ribosomal_L13"/>
    <property type="match status" value="1"/>
</dbReference>
<dbReference type="PIRSF" id="PIRSF002181">
    <property type="entry name" value="Ribosomal_L13"/>
    <property type="match status" value="1"/>
</dbReference>
<dbReference type="SUPFAM" id="SSF52161">
    <property type="entry name" value="Ribosomal protein L13"/>
    <property type="match status" value="1"/>
</dbReference>
<sequence length="154" mass="17350">MATFSQKPAEVVKKWVLIDAEGLVVGRLASLVANRLRGKHKATFTPHVDDGDNVIIINADKVVLTGKKYTDKKYYWHTGHPGGIKERTARQILEGRFPERVLEKAIERMIPRGPLGRRQMKNLRVYAGPNHQHEAQQPEVLDVAALNRKNKGNA</sequence>
<accession>B0CLB8</accession>
<feature type="chain" id="PRO_1000087078" description="Large ribosomal subunit protein uL13">
    <location>
        <begin position="1"/>
        <end position="154"/>
    </location>
</feature>
<comment type="function">
    <text evidence="1">This protein is one of the early assembly proteins of the 50S ribosomal subunit, although it is not seen to bind rRNA by itself. It is important during the early stages of 50S assembly.</text>
</comment>
<comment type="subunit">
    <text evidence="1">Part of the 50S ribosomal subunit.</text>
</comment>
<comment type="similarity">
    <text evidence="1">Belongs to the universal ribosomal protein uL13 family.</text>
</comment>
<name>RL13_BRUSI</name>
<organism>
    <name type="scientific">Brucella suis (strain ATCC 23445 / NCTC 10510)</name>
    <dbReference type="NCBI Taxonomy" id="470137"/>
    <lineage>
        <taxon>Bacteria</taxon>
        <taxon>Pseudomonadati</taxon>
        <taxon>Pseudomonadota</taxon>
        <taxon>Alphaproteobacteria</taxon>
        <taxon>Hyphomicrobiales</taxon>
        <taxon>Brucellaceae</taxon>
        <taxon>Brucella/Ochrobactrum group</taxon>
        <taxon>Brucella</taxon>
    </lineage>
</organism>